<sequence length="378" mass="39713">MASPRLENFRRIVVKVGSSLLVDSEAGEVRASWLAALAADIARLHGRGCELLVVSSGSIALGRSRLKLPRGPLKLEESQAAAAVGQIALARIWSEVLGDHGIGAGQILVTLQDTEERRRYLNARSTIAKLLDWRAVPVINENDTVATAEIRYGDNDRLAARVATMASADLLVLLSDIDGLYTAPPAQDPNARLIPVVESITADIEAMAGSAASEFSRGGMRTKIEAAKIATTGGTHMLIASGKIEHPLAAIANGGRCTWFLTPANPVTARKRWIAGSLEPKGTLTIDAGAVTALRAGKSLLPAGVIRVDGQFARGDAVVVRGPDTHEIGRGLVAYDADDAERIKGRSSPDVAVILGISGRAEMIHRDDLVIGPAGAMG</sequence>
<proteinExistence type="inferred from homology"/>
<protein>
    <recommendedName>
        <fullName evidence="1">Glutamate 5-kinase</fullName>
        <ecNumber evidence="1">2.7.2.11</ecNumber>
    </recommendedName>
    <alternativeName>
        <fullName evidence="1">Gamma-glutamyl kinase</fullName>
        <shortName evidence="1">GK</shortName>
    </alternativeName>
</protein>
<reference key="1">
    <citation type="journal article" date="2007" name="Science">
        <title>Legumes symbioses: absence of nod genes in photosynthetic bradyrhizobia.</title>
        <authorList>
            <person name="Giraud E."/>
            <person name="Moulin L."/>
            <person name="Vallenet D."/>
            <person name="Barbe V."/>
            <person name="Cytryn E."/>
            <person name="Avarre J.-C."/>
            <person name="Jaubert M."/>
            <person name="Simon D."/>
            <person name="Cartieaux F."/>
            <person name="Prin Y."/>
            <person name="Bena G."/>
            <person name="Hannibal L."/>
            <person name="Fardoux J."/>
            <person name="Kojadinovic M."/>
            <person name="Vuillet L."/>
            <person name="Lajus A."/>
            <person name="Cruveiller S."/>
            <person name="Rouy Z."/>
            <person name="Mangenot S."/>
            <person name="Segurens B."/>
            <person name="Dossat C."/>
            <person name="Franck W.L."/>
            <person name="Chang W.-S."/>
            <person name="Saunders E."/>
            <person name="Bruce D."/>
            <person name="Richardson P."/>
            <person name="Normand P."/>
            <person name="Dreyfus B."/>
            <person name="Pignol D."/>
            <person name="Stacey G."/>
            <person name="Emerich D."/>
            <person name="Vermeglio A."/>
            <person name="Medigue C."/>
            <person name="Sadowsky M."/>
        </authorList>
    </citation>
    <scope>NUCLEOTIDE SEQUENCE [LARGE SCALE GENOMIC DNA]</scope>
    <source>
        <strain>BTAi1 / ATCC BAA-1182</strain>
    </source>
</reference>
<evidence type="ECO:0000255" key="1">
    <source>
        <dbReference type="HAMAP-Rule" id="MF_00456"/>
    </source>
</evidence>
<gene>
    <name evidence="1" type="primary">proB</name>
    <name type="ordered locus">BBta_0422</name>
</gene>
<name>PROB_BRASB</name>
<comment type="function">
    <text evidence="1">Catalyzes the transfer of a phosphate group to glutamate to form L-glutamate 5-phosphate.</text>
</comment>
<comment type="catalytic activity">
    <reaction evidence="1">
        <text>L-glutamate + ATP = L-glutamyl 5-phosphate + ADP</text>
        <dbReference type="Rhea" id="RHEA:14877"/>
        <dbReference type="ChEBI" id="CHEBI:29985"/>
        <dbReference type="ChEBI" id="CHEBI:30616"/>
        <dbReference type="ChEBI" id="CHEBI:58274"/>
        <dbReference type="ChEBI" id="CHEBI:456216"/>
        <dbReference type="EC" id="2.7.2.11"/>
    </reaction>
</comment>
<comment type="pathway">
    <text evidence="1">Amino-acid biosynthesis; L-proline biosynthesis; L-glutamate 5-semialdehyde from L-glutamate: step 1/2.</text>
</comment>
<comment type="subcellular location">
    <subcellularLocation>
        <location evidence="1">Cytoplasm</location>
    </subcellularLocation>
</comment>
<comment type="similarity">
    <text evidence="1">Belongs to the glutamate 5-kinase family.</text>
</comment>
<accession>A5E964</accession>
<keyword id="KW-0028">Amino-acid biosynthesis</keyword>
<keyword id="KW-0067">ATP-binding</keyword>
<keyword id="KW-0963">Cytoplasm</keyword>
<keyword id="KW-0418">Kinase</keyword>
<keyword id="KW-0547">Nucleotide-binding</keyword>
<keyword id="KW-0641">Proline biosynthesis</keyword>
<keyword id="KW-1185">Reference proteome</keyword>
<keyword id="KW-0808">Transferase</keyword>
<feature type="chain" id="PRO_1000081037" description="Glutamate 5-kinase">
    <location>
        <begin position="1"/>
        <end position="378"/>
    </location>
</feature>
<feature type="domain" description="PUA" evidence="1">
    <location>
        <begin position="281"/>
        <end position="358"/>
    </location>
</feature>
<feature type="binding site" evidence="1">
    <location>
        <position position="15"/>
    </location>
    <ligand>
        <name>ATP</name>
        <dbReference type="ChEBI" id="CHEBI:30616"/>
    </ligand>
</feature>
<feature type="binding site" evidence="1">
    <location>
        <position position="56"/>
    </location>
    <ligand>
        <name>substrate</name>
    </ligand>
</feature>
<feature type="binding site" evidence="1">
    <location>
        <position position="143"/>
    </location>
    <ligand>
        <name>substrate</name>
    </ligand>
</feature>
<feature type="binding site" evidence="1">
    <location>
        <position position="155"/>
    </location>
    <ligand>
        <name>substrate</name>
    </ligand>
</feature>
<feature type="binding site" evidence="1">
    <location>
        <begin position="175"/>
        <end position="176"/>
    </location>
    <ligand>
        <name>ATP</name>
        <dbReference type="ChEBI" id="CHEBI:30616"/>
    </ligand>
</feature>
<organism>
    <name type="scientific">Bradyrhizobium sp. (strain BTAi1 / ATCC BAA-1182)</name>
    <dbReference type="NCBI Taxonomy" id="288000"/>
    <lineage>
        <taxon>Bacteria</taxon>
        <taxon>Pseudomonadati</taxon>
        <taxon>Pseudomonadota</taxon>
        <taxon>Alphaproteobacteria</taxon>
        <taxon>Hyphomicrobiales</taxon>
        <taxon>Nitrobacteraceae</taxon>
        <taxon>Bradyrhizobium</taxon>
    </lineage>
</organism>
<dbReference type="EC" id="2.7.2.11" evidence="1"/>
<dbReference type="EMBL" id="CP000494">
    <property type="protein sequence ID" value="ABQ32708.1"/>
    <property type="molecule type" value="Genomic_DNA"/>
</dbReference>
<dbReference type="RefSeq" id="WP_012040761.1">
    <property type="nucleotide sequence ID" value="NC_009485.1"/>
</dbReference>
<dbReference type="SMR" id="A5E964"/>
<dbReference type="STRING" id="288000.BBta_0422"/>
<dbReference type="KEGG" id="bbt:BBta_0422"/>
<dbReference type="eggNOG" id="COG0263">
    <property type="taxonomic scope" value="Bacteria"/>
</dbReference>
<dbReference type="HOGENOM" id="CLU_025400_2_0_5"/>
<dbReference type="OrthoDB" id="9804434at2"/>
<dbReference type="UniPathway" id="UPA00098">
    <property type="reaction ID" value="UER00359"/>
</dbReference>
<dbReference type="Proteomes" id="UP000000246">
    <property type="component" value="Chromosome"/>
</dbReference>
<dbReference type="GO" id="GO:0005829">
    <property type="term" value="C:cytosol"/>
    <property type="evidence" value="ECO:0007669"/>
    <property type="project" value="TreeGrafter"/>
</dbReference>
<dbReference type="GO" id="GO:0005524">
    <property type="term" value="F:ATP binding"/>
    <property type="evidence" value="ECO:0007669"/>
    <property type="project" value="UniProtKB-KW"/>
</dbReference>
<dbReference type="GO" id="GO:0004349">
    <property type="term" value="F:glutamate 5-kinase activity"/>
    <property type="evidence" value="ECO:0007669"/>
    <property type="project" value="UniProtKB-UniRule"/>
</dbReference>
<dbReference type="GO" id="GO:0003723">
    <property type="term" value="F:RNA binding"/>
    <property type="evidence" value="ECO:0007669"/>
    <property type="project" value="InterPro"/>
</dbReference>
<dbReference type="GO" id="GO:0055129">
    <property type="term" value="P:L-proline biosynthetic process"/>
    <property type="evidence" value="ECO:0007669"/>
    <property type="project" value="UniProtKB-UniRule"/>
</dbReference>
<dbReference type="CDD" id="cd04242">
    <property type="entry name" value="AAK_G5K_ProB"/>
    <property type="match status" value="1"/>
</dbReference>
<dbReference type="CDD" id="cd21157">
    <property type="entry name" value="PUA_G5K"/>
    <property type="match status" value="1"/>
</dbReference>
<dbReference type="FunFam" id="2.30.130.10:FF:000007">
    <property type="entry name" value="Glutamate 5-kinase"/>
    <property type="match status" value="1"/>
</dbReference>
<dbReference type="FunFam" id="3.40.1160.10:FF:000018">
    <property type="entry name" value="Glutamate 5-kinase"/>
    <property type="match status" value="1"/>
</dbReference>
<dbReference type="Gene3D" id="3.40.1160.10">
    <property type="entry name" value="Acetylglutamate kinase-like"/>
    <property type="match status" value="1"/>
</dbReference>
<dbReference type="Gene3D" id="2.30.130.10">
    <property type="entry name" value="PUA domain"/>
    <property type="match status" value="1"/>
</dbReference>
<dbReference type="HAMAP" id="MF_00456">
    <property type="entry name" value="ProB"/>
    <property type="match status" value="1"/>
</dbReference>
<dbReference type="InterPro" id="IPR036393">
    <property type="entry name" value="AceGlu_kinase-like_sf"/>
</dbReference>
<dbReference type="InterPro" id="IPR001048">
    <property type="entry name" value="Asp/Glu/Uridylate_kinase"/>
</dbReference>
<dbReference type="InterPro" id="IPR041739">
    <property type="entry name" value="G5K_ProB"/>
</dbReference>
<dbReference type="InterPro" id="IPR001057">
    <property type="entry name" value="Glu/AcGlu_kinase"/>
</dbReference>
<dbReference type="InterPro" id="IPR011529">
    <property type="entry name" value="Glu_5kinase"/>
</dbReference>
<dbReference type="InterPro" id="IPR005715">
    <property type="entry name" value="Glu_5kinase/COase_Synthase"/>
</dbReference>
<dbReference type="InterPro" id="IPR019797">
    <property type="entry name" value="Glutamate_5-kinase_CS"/>
</dbReference>
<dbReference type="InterPro" id="IPR002478">
    <property type="entry name" value="PUA"/>
</dbReference>
<dbReference type="InterPro" id="IPR015947">
    <property type="entry name" value="PUA-like_sf"/>
</dbReference>
<dbReference type="InterPro" id="IPR036974">
    <property type="entry name" value="PUA_sf"/>
</dbReference>
<dbReference type="NCBIfam" id="TIGR01027">
    <property type="entry name" value="proB"/>
    <property type="match status" value="1"/>
</dbReference>
<dbReference type="PANTHER" id="PTHR43654">
    <property type="entry name" value="GLUTAMATE 5-KINASE"/>
    <property type="match status" value="1"/>
</dbReference>
<dbReference type="PANTHER" id="PTHR43654:SF1">
    <property type="entry name" value="ISOPENTENYL PHOSPHATE KINASE"/>
    <property type="match status" value="1"/>
</dbReference>
<dbReference type="Pfam" id="PF00696">
    <property type="entry name" value="AA_kinase"/>
    <property type="match status" value="1"/>
</dbReference>
<dbReference type="Pfam" id="PF01472">
    <property type="entry name" value="PUA"/>
    <property type="match status" value="1"/>
</dbReference>
<dbReference type="PIRSF" id="PIRSF000729">
    <property type="entry name" value="GK"/>
    <property type="match status" value="1"/>
</dbReference>
<dbReference type="PRINTS" id="PR00474">
    <property type="entry name" value="GLU5KINASE"/>
</dbReference>
<dbReference type="SMART" id="SM00359">
    <property type="entry name" value="PUA"/>
    <property type="match status" value="1"/>
</dbReference>
<dbReference type="SUPFAM" id="SSF53633">
    <property type="entry name" value="Carbamate kinase-like"/>
    <property type="match status" value="1"/>
</dbReference>
<dbReference type="SUPFAM" id="SSF88697">
    <property type="entry name" value="PUA domain-like"/>
    <property type="match status" value="1"/>
</dbReference>
<dbReference type="PROSITE" id="PS00902">
    <property type="entry name" value="GLUTAMATE_5_KINASE"/>
    <property type="match status" value="1"/>
</dbReference>
<dbReference type="PROSITE" id="PS50890">
    <property type="entry name" value="PUA"/>
    <property type="match status" value="1"/>
</dbReference>